<proteinExistence type="inferred from homology"/>
<reference key="1">
    <citation type="journal article" date="2008" name="J. Bacteriol.">
        <title>Genome sequence of Staphylococcus aureus strain Newman and comparative analysis of staphylococcal genomes: polymorphism and evolution of two major pathogenicity islands.</title>
        <authorList>
            <person name="Baba T."/>
            <person name="Bae T."/>
            <person name="Schneewind O."/>
            <person name="Takeuchi F."/>
            <person name="Hiramatsu K."/>
        </authorList>
    </citation>
    <scope>NUCLEOTIDE SEQUENCE [LARGE SCALE GENOMIC DNA]</scope>
    <source>
        <strain>Newman</strain>
    </source>
</reference>
<accession>A6QF69</accession>
<comment type="function">
    <text evidence="1">Catalyzes the transfer of the diacylglyceryl group from phosphatidylglycerol to the sulfhydryl group of the N-terminal cysteine of a prolipoprotein, the first step in the formation of mature lipoproteins.</text>
</comment>
<comment type="catalytic activity">
    <reaction evidence="1">
        <text>L-cysteinyl-[prolipoprotein] + a 1,2-diacyl-sn-glycero-3-phospho-(1'-sn-glycerol) = an S-1,2-diacyl-sn-glyceryl-L-cysteinyl-[prolipoprotein] + sn-glycerol 1-phosphate + H(+)</text>
        <dbReference type="Rhea" id="RHEA:56712"/>
        <dbReference type="Rhea" id="RHEA-COMP:14679"/>
        <dbReference type="Rhea" id="RHEA-COMP:14680"/>
        <dbReference type="ChEBI" id="CHEBI:15378"/>
        <dbReference type="ChEBI" id="CHEBI:29950"/>
        <dbReference type="ChEBI" id="CHEBI:57685"/>
        <dbReference type="ChEBI" id="CHEBI:64716"/>
        <dbReference type="ChEBI" id="CHEBI:140658"/>
        <dbReference type="EC" id="2.5.1.145"/>
    </reaction>
</comment>
<comment type="pathway">
    <text evidence="1">Protein modification; lipoprotein biosynthesis (diacylglyceryl transfer).</text>
</comment>
<comment type="subcellular location">
    <subcellularLocation>
        <location evidence="1">Cell membrane</location>
        <topology evidence="1">Multi-pass membrane protein</topology>
    </subcellularLocation>
</comment>
<comment type="similarity">
    <text evidence="1">Belongs to the Lgt family.</text>
</comment>
<protein>
    <recommendedName>
        <fullName evidence="1">Phosphatidylglycerol--prolipoprotein diacylglyceryl transferase</fullName>
        <ecNumber evidence="1">2.5.1.145</ecNumber>
    </recommendedName>
</protein>
<gene>
    <name evidence="1" type="primary">lgt</name>
    <name type="ordered locus">NWMN_0729</name>
</gene>
<sequence length="279" mass="31572">MGIVFNYIDPVAFNLGPLSVRWYGIIIAVGILLGYFVAQRALVKAGLHKDTLVDIIFYSALFGFIAARIYFVIFQWPYYAENPSEIIKIWHGGIAIHGGLIGGFIAGVIVCKVKNLNPFQIGDIVAPSIILAQGIGRWGNFMNHEAHGGSVSRAFLEQLHLPNFIIENMYINGQYYHPTFLYESIWDVAGFIILVNIRKHLKLGETFFLYLTWYSIGRFFIEGLRTDSLMLTSNIRVAQLVSILLILISISLIVYRRIKYNPPLYSKVGALPWPTKKVK</sequence>
<organism>
    <name type="scientific">Staphylococcus aureus (strain Newman)</name>
    <dbReference type="NCBI Taxonomy" id="426430"/>
    <lineage>
        <taxon>Bacteria</taxon>
        <taxon>Bacillati</taxon>
        <taxon>Bacillota</taxon>
        <taxon>Bacilli</taxon>
        <taxon>Bacillales</taxon>
        <taxon>Staphylococcaceae</taxon>
        <taxon>Staphylococcus</taxon>
    </lineage>
</organism>
<evidence type="ECO:0000255" key="1">
    <source>
        <dbReference type="HAMAP-Rule" id="MF_01147"/>
    </source>
</evidence>
<keyword id="KW-1003">Cell membrane</keyword>
<keyword id="KW-0472">Membrane</keyword>
<keyword id="KW-0808">Transferase</keyword>
<keyword id="KW-0812">Transmembrane</keyword>
<keyword id="KW-1133">Transmembrane helix</keyword>
<dbReference type="EC" id="2.5.1.145" evidence="1"/>
<dbReference type="EMBL" id="AP009351">
    <property type="protein sequence ID" value="BAF67001.1"/>
    <property type="molecule type" value="Genomic_DNA"/>
</dbReference>
<dbReference type="RefSeq" id="WP_000513308.1">
    <property type="nucleotide sequence ID" value="NZ_JBBIAE010000002.1"/>
</dbReference>
<dbReference type="SMR" id="A6QF69"/>
<dbReference type="KEGG" id="sae:NWMN_0729"/>
<dbReference type="HOGENOM" id="CLU_013386_0_1_9"/>
<dbReference type="UniPathway" id="UPA00664"/>
<dbReference type="Proteomes" id="UP000006386">
    <property type="component" value="Chromosome"/>
</dbReference>
<dbReference type="GO" id="GO:0005886">
    <property type="term" value="C:plasma membrane"/>
    <property type="evidence" value="ECO:0007669"/>
    <property type="project" value="UniProtKB-SubCell"/>
</dbReference>
<dbReference type="GO" id="GO:0008961">
    <property type="term" value="F:phosphatidylglycerol-prolipoprotein diacylglyceryl transferase activity"/>
    <property type="evidence" value="ECO:0007669"/>
    <property type="project" value="UniProtKB-UniRule"/>
</dbReference>
<dbReference type="GO" id="GO:0042158">
    <property type="term" value="P:lipoprotein biosynthetic process"/>
    <property type="evidence" value="ECO:0007669"/>
    <property type="project" value="UniProtKB-UniRule"/>
</dbReference>
<dbReference type="HAMAP" id="MF_01147">
    <property type="entry name" value="Lgt"/>
    <property type="match status" value="1"/>
</dbReference>
<dbReference type="InterPro" id="IPR001640">
    <property type="entry name" value="Lgt"/>
</dbReference>
<dbReference type="NCBIfam" id="TIGR00544">
    <property type="entry name" value="lgt"/>
    <property type="match status" value="1"/>
</dbReference>
<dbReference type="PANTHER" id="PTHR30589:SF0">
    <property type="entry name" value="PHOSPHATIDYLGLYCEROL--PROLIPOPROTEIN DIACYLGLYCERYL TRANSFERASE"/>
    <property type="match status" value="1"/>
</dbReference>
<dbReference type="PANTHER" id="PTHR30589">
    <property type="entry name" value="PROLIPOPROTEIN DIACYLGLYCERYL TRANSFERASE"/>
    <property type="match status" value="1"/>
</dbReference>
<dbReference type="Pfam" id="PF01790">
    <property type="entry name" value="LGT"/>
    <property type="match status" value="1"/>
</dbReference>
<dbReference type="PROSITE" id="PS01311">
    <property type="entry name" value="LGT"/>
    <property type="match status" value="1"/>
</dbReference>
<name>LGT_STAAE</name>
<feature type="chain" id="PRO_1000073060" description="Phosphatidylglycerol--prolipoprotein diacylglyceryl transferase">
    <location>
        <begin position="1"/>
        <end position="279"/>
    </location>
</feature>
<feature type="transmembrane region" description="Helical" evidence="1">
    <location>
        <begin position="18"/>
        <end position="38"/>
    </location>
</feature>
<feature type="transmembrane region" description="Helical" evidence="1">
    <location>
        <begin position="55"/>
        <end position="75"/>
    </location>
</feature>
<feature type="transmembrane region" description="Helical" evidence="1">
    <location>
        <begin position="89"/>
        <end position="109"/>
    </location>
</feature>
<feature type="transmembrane region" description="Helical" evidence="1">
    <location>
        <begin position="203"/>
        <end position="223"/>
    </location>
</feature>
<feature type="transmembrane region" description="Helical" evidence="1">
    <location>
        <begin position="235"/>
        <end position="255"/>
    </location>
</feature>
<feature type="binding site" evidence="1">
    <location>
        <position position="137"/>
    </location>
    <ligand>
        <name>a 1,2-diacyl-sn-glycero-3-phospho-(1'-sn-glycerol)</name>
        <dbReference type="ChEBI" id="CHEBI:64716"/>
    </ligand>
</feature>